<protein>
    <recommendedName>
        <fullName>11-beta-hydroxysteroid dehydrogenase 1B</fullName>
        <ecNumber>1.1.1.146</ecNumber>
    </recommendedName>
    <alternativeName>
        <fullName>17-beta-hydroxysteroid dehydrogenase 1B</fullName>
        <ecNumber>1.1.1.-</ecNumber>
    </alternativeName>
    <alternativeName>
        <fullName>Hydroxysteroid dehydrogenase 1</fullName>
        <shortName>AtHSD1</shortName>
    </alternativeName>
</protein>
<sequence>MELINDFLNLTAPFFTFFGLCFFLPPFYFFKFLQSIFSTIFSENLYGKVVLITGASSGIGEQLAYEYACRGACLALTARRKNRLEEVAEIARELGSPNVVTVHADVSKPDDCRRIVDDTITHFGRLDHLVNNAGMTQISMFENIEDITRTKAVLDTNFWGSVYTTRAALPYLRQSNGKIVAMSSSAAWLTAPRMSFYNASKAALLSFFETMRIELGGDVHITIVTPGYIESELTQGKYFSGEGELIVNQDMRDVQVGPFPVASASGCAKSIVNGVCRKQRYVTEPSWFKVTYLWKVLCPELIEWGCRLLYMTGTGMSEDTALNKRIMDIPGVRSTLYPESIRTPEIKSD</sequence>
<organism>
    <name type="scientific">Arabidopsis thaliana</name>
    <name type="common">Mouse-ear cress</name>
    <dbReference type="NCBI Taxonomy" id="3702"/>
    <lineage>
        <taxon>Eukaryota</taxon>
        <taxon>Viridiplantae</taxon>
        <taxon>Streptophyta</taxon>
        <taxon>Embryophyta</taxon>
        <taxon>Tracheophyta</taxon>
        <taxon>Spermatophyta</taxon>
        <taxon>Magnoliopsida</taxon>
        <taxon>eudicotyledons</taxon>
        <taxon>Gunneridae</taxon>
        <taxon>Pentapetalae</taxon>
        <taxon>rosids</taxon>
        <taxon>malvids</taxon>
        <taxon>Brassicales</taxon>
        <taxon>Brassicaceae</taxon>
        <taxon>Camelineae</taxon>
        <taxon>Arabidopsis</taxon>
    </lineage>
</organism>
<dbReference type="EC" id="1.1.1.146"/>
<dbReference type="EC" id="1.1.1.-"/>
<dbReference type="EMBL" id="AB023037">
    <property type="protein sequence ID" value="BAA96983.1"/>
    <property type="molecule type" value="Genomic_DNA"/>
</dbReference>
<dbReference type="EMBL" id="CP002688">
    <property type="protein sequence ID" value="AED95981.1"/>
    <property type="molecule type" value="Genomic_DNA"/>
</dbReference>
<dbReference type="EMBL" id="AF446888">
    <property type="protein sequence ID" value="AAL38621.1"/>
    <property type="molecule type" value="mRNA"/>
</dbReference>
<dbReference type="EMBL" id="AY052660">
    <property type="protein sequence ID" value="AAK96564.1"/>
    <property type="molecule type" value="mRNA"/>
</dbReference>
<dbReference type="EMBL" id="AY062768">
    <property type="protein sequence ID" value="AAL32846.1"/>
    <property type="molecule type" value="mRNA"/>
</dbReference>
<dbReference type="EMBL" id="AY081653">
    <property type="protein sequence ID" value="AAM10215.1"/>
    <property type="molecule type" value="mRNA"/>
</dbReference>
<dbReference type="EMBL" id="AK221698">
    <property type="protein sequence ID" value="BAD95411.1"/>
    <property type="molecule type" value="mRNA"/>
</dbReference>
<dbReference type="RefSeq" id="NP_568742.1">
    <property type="nucleotide sequence ID" value="NM_124448.5"/>
</dbReference>
<dbReference type="RefSeq" id="NP_680418.1">
    <property type="nucleotide sequence ID" value="NM_148113.3"/>
</dbReference>
<dbReference type="SMR" id="P0DKC6"/>
<dbReference type="BioGRID" id="20375">
    <property type="interactions" value="2"/>
</dbReference>
<dbReference type="BioGRID" id="20387">
    <property type="interactions" value="1"/>
</dbReference>
<dbReference type="FunCoup" id="P0DKC6">
    <property type="interactions" value="170"/>
</dbReference>
<dbReference type="STRING" id="3702.P0DKC6"/>
<dbReference type="ProteomicsDB" id="232106"/>
<dbReference type="EnsemblPlants" id="AT5G50600.1">
    <property type="protein sequence ID" value="AT5G50600.1"/>
    <property type="gene ID" value="AT5G50600"/>
</dbReference>
<dbReference type="EnsemblPlants" id="AT5G50700.1">
    <property type="protein sequence ID" value="AT5G50700.1"/>
    <property type="gene ID" value="AT5G50700"/>
</dbReference>
<dbReference type="GeneID" id="835129"/>
<dbReference type="GeneID" id="835141"/>
<dbReference type="Gramene" id="AT5G50600.1">
    <property type="protein sequence ID" value="AT5G50600.1"/>
    <property type="gene ID" value="AT5G50600"/>
</dbReference>
<dbReference type="Gramene" id="AT5G50700.1">
    <property type="protein sequence ID" value="AT5G50700.1"/>
    <property type="gene ID" value="AT5G50700"/>
</dbReference>
<dbReference type="KEGG" id="ath:AT5G50600"/>
<dbReference type="KEGG" id="ath:AT5G50700"/>
<dbReference type="Araport" id="AT5G50700"/>
<dbReference type="TAIR" id="AT5G50700">
    <property type="gene designation" value="HSD1"/>
</dbReference>
<dbReference type="HOGENOM" id="CLU_010194_2_1_1"/>
<dbReference type="InParanoid" id="P0DKC6"/>
<dbReference type="OMA" id="LEWCYRI"/>
<dbReference type="OrthoDB" id="47007at2759"/>
<dbReference type="PhylomeDB" id="P0DKC6"/>
<dbReference type="PRO" id="PR:P0DKC6"/>
<dbReference type="Proteomes" id="UP000006548">
    <property type="component" value="Chromosome 5"/>
</dbReference>
<dbReference type="ExpressionAtlas" id="P0DKC6">
    <property type="expression patterns" value="baseline and differential"/>
</dbReference>
<dbReference type="GO" id="GO:0005811">
    <property type="term" value="C:lipid droplet"/>
    <property type="evidence" value="ECO:0007669"/>
    <property type="project" value="UniProtKB-SubCell"/>
</dbReference>
<dbReference type="GO" id="GO:0016020">
    <property type="term" value="C:membrane"/>
    <property type="evidence" value="ECO:0007669"/>
    <property type="project" value="UniProtKB-SubCell"/>
</dbReference>
<dbReference type="GO" id="GO:0070524">
    <property type="term" value="F:11-beta-hydroxysteroid dehydrogenase (NADP+) activity"/>
    <property type="evidence" value="ECO:0007669"/>
    <property type="project" value="UniProtKB-EC"/>
</dbReference>
<dbReference type="GO" id="GO:0006694">
    <property type="term" value="P:steroid biosynthetic process"/>
    <property type="evidence" value="ECO:0007669"/>
    <property type="project" value="UniProtKB-KW"/>
</dbReference>
<dbReference type="Gene3D" id="3.40.50.720">
    <property type="entry name" value="NAD(P)-binding Rossmann-like Domain"/>
    <property type="match status" value="1"/>
</dbReference>
<dbReference type="InterPro" id="IPR036291">
    <property type="entry name" value="NAD(P)-bd_dom_sf"/>
</dbReference>
<dbReference type="InterPro" id="IPR020904">
    <property type="entry name" value="Sc_DH/Rdtase_CS"/>
</dbReference>
<dbReference type="InterPro" id="IPR002347">
    <property type="entry name" value="SDR_fam"/>
</dbReference>
<dbReference type="NCBIfam" id="NF004825">
    <property type="entry name" value="PRK06181.1"/>
    <property type="match status" value="1"/>
</dbReference>
<dbReference type="PANTHER" id="PTHR43391:SF89">
    <property type="entry name" value="11-BETA-HYDROXYSTEROID DEHYDROGENASE 1A-RELATED"/>
    <property type="match status" value="1"/>
</dbReference>
<dbReference type="PANTHER" id="PTHR43391">
    <property type="entry name" value="RETINOL DEHYDROGENASE-RELATED"/>
    <property type="match status" value="1"/>
</dbReference>
<dbReference type="Pfam" id="PF00106">
    <property type="entry name" value="adh_short"/>
    <property type="match status" value="1"/>
</dbReference>
<dbReference type="PRINTS" id="PR00081">
    <property type="entry name" value="GDHRDH"/>
</dbReference>
<dbReference type="PRINTS" id="PR00080">
    <property type="entry name" value="SDRFAMILY"/>
</dbReference>
<dbReference type="SUPFAM" id="SSF51735">
    <property type="entry name" value="NAD(P)-binding Rossmann-fold domains"/>
    <property type="match status" value="1"/>
</dbReference>
<dbReference type="PROSITE" id="PS00061">
    <property type="entry name" value="ADH_SHORT"/>
    <property type="match status" value="1"/>
</dbReference>
<comment type="function">
    <text evidence="4 5 6">Catalyzes 11-beta, 17-beta-hydroxysteroid and reduces 17-beta-ketosteroids. Involved in regulating plant growth and development, probably promoting or mediating brassinosteroid effects. Plays a role during seed maturation.</text>
</comment>
<comment type="catalytic activity">
    <reaction evidence="4">
        <text>an 11beta-hydroxysteroid + NADP(+) = an 11-oxosteroid + NADPH + H(+)</text>
        <dbReference type="Rhea" id="RHEA:11388"/>
        <dbReference type="ChEBI" id="CHEBI:15378"/>
        <dbReference type="ChEBI" id="CHEBI:35346"/>
        <dbReference type="ChEBI" id="CHEBI:47787"/>
        <dbReference type="ChEBI" id="CHEBI:57783"/>
        <dbReference type="ChEBI" id="CHEBI:58349"/>
        <dbReference type="EC" id="1.1.1.146"/>
    </reaction>
</comment>
<comment type="subcellular location">
    <subcellularLocation>
        <location>Lipid droplet</location>
    </subcellularLocation>
    <subcellularLocation>
        <location>Membrane</location>
        <topology>Single-pass type II membrane protein</topology>
    </subcellularLocation>
</comment>
<comment type="tissue specificity">
    <text evidence="5 6">Expressed in the above-ground part of seedlings, especially in the vascular tissues. Also detected in the buds and silique pedicels. Highly induced in oil-accumulating tissues of maturing seeds.</text>
</comment>
<comment type="developmental stage">
    <text evidence="6">Firstly detected during early seed maturation, at 9 days after anthesis (DAA), peaking at 18 DAA, before falling sharply during late maturation.</text>
</comment>
<comment type="induction">
    <text evidence="5 6">By brassinosteroids (BRs). Up-regulated by LEC2.</text>
</comment>
<comment type="disruption phenotype">
    <text evidence="5">Semidwarf phenotype with reduced sensitivity to brassinosteroids (BRs) and enhanced sensitivity to abscisic acid (ABA) during germination.</text>
</comment>
<comment type="similarity">
    <text evidence="7">Belongs to the short-chain dehydrogenases/reductases (SDR) family.</text>
</comment>
<proteinExistence type="evidence at protein level"/>
<feature type="chain" id="PRO_0000422279" description="11-beta-hydroxysteroid dehydrogenase 1B">
    <location>
        <begin position="1"/>
        <end position="349"/>
    </location>
</feature>
<feature type="transmembrane region" description="Helical; Signal-anchor for type II membrane protein" evidence="2">
    <location>
        <begin position="10"/>
        <end position="30"/>
    </location>
</feature>
<feature type="active site" description="Proton acceptor" evidence="3">
    <location>
        <position position="197"/>
    </location>
</feature>
<feature type="binding site" evidence="1">
    <location>
        <begin position="54"/>
        <end position="80"/>
    </location>
    <ligand>
        <name>NADP(+)</name>
        <dbReference type="ChEBI" id="CHEBI:58349"/>
    </ligand>
</feature>
<feature type="binding site" evidence="1">
    <location>
        <position position="105"/>
    </location>
    <ligand>
        <name>NADP(+)</name>
        <dbReference type="ChEBI" id="CHEBI:58349"/>
    </ligand>
</feature>
<feature type="binding site" evidence="1">
    <location>
        <position position="184"/>
    </location>
    <ligand>
        <name>substrate</name>
    </ligand>
</feature>
<feature type="binding site" evidence="1">
    <location>
        <begin position="197"/>
        <end position="201"/>
    </location>
    <ligand>
        <name>NADP(+)</name>
        <dbReference type="ChEBI" id="CHEBI:58349"/>
    </ligand>
</feature>
<feature type="binding site" evidence="1">
    <location>
        <position position="201"/>
    </location>
    <ligand>
        <name>NADP(+)</name>
        <dbReference type="ChEBI" id="CHEBI:58349"/>
    </ligand>
</feature>
<evidence type="ECO:0000250" key="1"/>
<evidence type="ECO:0000255" key="2"/>
<evidence type="ECO:0000255" key="3">
    <source>
        <dbReference type="PROSITE-ProRule" id="PRU10001"/>
    </source>
</evidence>
<evidence type="ECO:0000269" key="4">
    <source>
    </source>
</evidence>
<evidence type="ECO:0000269" key="5">
    <source>
    </source>
</evidence>
<evidence type="ECO:0000269" key="6">
    <source>
    </source>
</evidence>
<evidence type="ECO:0000305" key="7"/>
<gene>
    <name type="primary">HSD1</name>
    <name type="ordered locus">At5g50700</name>
    <name type="ORF">MFB16.9</name>
</gene>
<accession>P0DKC6</accession>
<accession>Q9LUF1</accession>
<name>HSD1B_ARATH</name>
<keyword id="KW-0444">Lipid biosynthesis</keyword>
<keyword id="KW-0551">Lipid droplet</keyword>
<keyword id="KW-0443">Lipid metabolism</keyword>
<keyword id="KW-0472">Membrane</keyword>
<keyword id="KW-0521">NADP</keyword>
<keyword id="KW-0560">Oxidoreductase</keyword>
<keyword id="KW-1185">Reference proteome</keyword>
<keyword id="KW-0735">Signal-anchor</keyword>
<keyword id="KW-0752">Steroid biosynthesis</keyword>
<keyword id="KW-0812">Transmembrane</keyword>
<keyword id="KW-1133">Transmembrane helix</keyword>
<reference key="1">
    <citation type="journal article" date="2000" name="DNA Res.">
        <title>Structural analysis of Arabidopsis thaliana chromosome 5. X. Sequence features of the regions of 3,076,755 bp covered by sixty P1 and TAC clones.</title>
        <authorList>
            <person name="Sato S."/>
            <person name="Nakamura Y."/>
            <person name="Kaneko T."/>
            <person name="Katoh T."/>
            <person name="Asamizu E."/>
            <person name="Kotani H."/>
            <person name="Tabata S."/>
        </authorList>
    </citation>
    <scope>NUCLEOTIDE SEQUENCE [LARGE SCALE GENOMIC DNA]</scope>
    <source>
        <strain>cv. Columbia</strain>
    </source>
</reference>
<reference key="2">
    <citation type="journal article" date="2017" name="Plant J.">
        <title>Araport11: a complete reannotation of the Arabidopsis thaliana reference genome.</title>
        <authorList>
            <person name="Cheng C.Y."/>
            <person name="Krishnakumar V."/>
            <person name="Chan A.P."/>
            <person name="Thibaud-Nissen F."/>
            <person name="Schobel S."/>
            <person name="Town C.D."/>
        </authorList>
    </citation>
    <scope>GENOME REANNOTATION</scope>
    <source>
        <strain>cv. Columbia</strain>
    </source>
</reference>
<reference key="3">
    <citation type="journal article" date="2003" name="Science">
        <title>Empirical analysis of transcriptional activity in the Arabidopsis genome.</title>
        <authorList>
            <person name="Yamada K."/>
            <person name="Lim J."/>
            <person name="Dale J.M."/>
            <person name="Chen H."/>
            <person name="Shinn P."/>
            <person name="Palm C.J."/>
            <person name="Southwick A.M."/>
            <person name="Wu H.C."/>
            <person name="Kim C.J."/>
            <person name="Nguyen M."/>
            <person name="Pham P.K."/>
            <person name="Cheuk R.F."/>
            <person name="Karlin-Newmann G."/>
            <person name="Liu S.X."/>
            <person name="Lam B."/>
            <person name="Sakano H."/>
            <person name="Wu T."/>
            <person name="Yu G."/>
            <person name="Miranda M."/>
            <person name="Quach H.L."/>
            <person name="Tripp M."/>
            <person name="Chang C.H."/>
            <person name="Lee J.M."/>
            <person name="Toriumi M.J."/>
            <person name="Chan M.M."/>
            <person name="Tang C.C."/>
            <person name="Onodera C.S."/>
            <person name="Deng J.M."/>
            <person name="Akiyama K."/>
            <person name="Ansari Y."/>
            <person name="Arakawa T."/>
            <person name="Banh J."/>
            <person name="Banno F."/>
            <person name="Bowser L."/>
            <person name="Brooks S.Y."/>
            <person name="Carninci P."/>
            <person name="Chao Q."/>
            <person name="Choy N."/>
            <person name="Enju A."/>
            <person name="Goldsmith A.D."/>
            <person name="Gurjal M."/>
            <person name="Hansen N.F."/>
            <person name="Hayashizaki Y."/>
            <person name="Johnson-Hopson C."/>
            <person name="Hsuan V.W."/>
            <person name="Iida K."/>
            <person name="Karnes M."/>
            <person name="Khan S."/>
            <person name="Koesema E."/>
            <person name="Ishida J."/>
            <person name="Jiang P.X."/>
            <person name="Jones T."/>
            <person name="Kawai J."/>
            <person name="Kamiya A."/>
            <person name="Meyers C."/>
            <person name="Nakajima M."/>
            <person name="Narusaka M."/>
            <person name="Seki M."/>
            <person name="Sakurai T."/>
            <person name="Satou M."/>
            <person name="Tamse R."/>
            <person name="Vaysberg M."/>
            <person name="Wallender E.K."/>
            <person name="Wong C."/>
            <person name="Yamamura Y."/>
            <person name="Yuan S."/>
            <person name="Shinozaki K."/>
            <person name="Davis R.W."/>
            <person name="Theologis A."/>
            <person name="Ecker J.R."/>
        </authorList>
    </citation>
    <scope>NUCLEOTIDE SEQUENCE [LARGE SCALE MRNA]</scope>
    <source>
        <strain>cv. Columbia</strain>
    </source>
</reference>
<reference key="4">
    <citation type="submission" date="2005-03" db="EMBL/GenBank/DDBJ databases">
        <title>Large-scale analysis of RIKEN Arabidopsis full-length (RAFL) cDNAs.</title>
        <authorList>
            <person name="Totoki Y."/>
            <person name="Seki M."/>
            <person name="Ishida J."/>
            <person name="Nakajima M."/>
            <person name="Enju A."/>
            <person name="Kamiya A."/>
            <person name="Narusaka M."/>
            <person name="Shin-i T."/>
            <person name="Nakagawa M."/>
            <person name="Sakamoto N."/>
            <person name="Oishi K."/>
            <person name="Kohara Y."/>
            <person name="Kobayashi M."/>
            <person name="Toyoda A."/>
            <person name="Sakaki Y."/>
            <person name="Sakurai T."/>
            <person name="Iida K."/>
            <person name="Akiyama K."/>
            <person name="Satou M."/>
            <person name="Toyoda T."/>
            <person name="Konagaya A."/>
            <person name="Carninci P."/>
            <person name="Kawai J."/>
            <person name="Hayashizaki Y."/>
            <person name="Shinozaki K."/>
        </authorList>
    </citation>
    <scope>NUCLEOTIDE SEQUENCE [LARGE SCALE MRNA]</scope>
    <source>
        <strain>cv. Columbia</strain>
    </source>
</reference>
<reference key="5">
    <citation type="journal article" date="2004" name="Plant Physiol. Biochem.">
        <title>Protein composition of oil bodies in Arabidopsis thaliana ecotype WS.</title>
        <authorList>
            <person name="Jolivet P."/>
            <person name="Roux E."/>
            <person name="D'Andrea S."/>
            <person name="Davanture M."/>
            <person name="Negroni L."/>
            <person name="Zivy M."/>
            <person name="Chardot T."/>
        </authorList>
    </citation>
    <scope>IDENTIFICATION BY MASS SPECTROMETRY</scope>
    <scope>SUBCELLULAR LOCATION</scope>
</reference>
<reference key="6">
    <citation type="journal article" date="2007" name="Biochimie">
        <title>At5g50600 encodes a member of the short-chain dehydrogenase reductase superfamily with 11beta- and 17beta-hydroxysteroid dehydrogenase activities associated with Arabidopsis thaliana seed oil bodies.</title>
        <authorList>
            <person name="d'Andrea S."/>
            <person name="Canonge M."/>
            <person name="Beopoulos A."/>
            <person name="Jolivet P."/>
            <person name="Hartmann M.A."/>
            <person name="Miquel M."/>
            <person name="Lepiniec L."/>
            <person name="Chardot T."/>
        </authorList>
    </citation>
    <scope>IDENTIFICATION BY MASS SPECTROMETRY</scope>
    <scope>SUBCELLULAR LOCATION</scope>
    <scope>FUNCTION</scope>
    <scope>CATALYTIC ACTIVITY</scope>
</reference>
<reference key="7">
    <citation type="journal article" date="2007" name="Plant Physiol.">
        <title>A putative hydroxysteroid dehydrogenase involved in regulating plant growth and development.</title>
        <authorList>
            <person name="Li F."/>
            <person name="Asami T."/>
            <person name="Wu X."/>
            <person name="Tsang E.W."/>
            <person name="Cutler A.J."/>
        </authorList>
    </citation>
    <scope>GENE FAMILY</scope>
    <scope>DISRUPTION PHENOTYPE</scope>
    <scope>FUNCTION</scope>
    <scope>INDUCTION</scope>
    <scope>TISSUE SPECIFICITY</scope>
</reference>
<reference key="8">
    <citation type="journal article" date="2009" name="Plant Cell Physiol.">
        <title>Regulation of HSD1 in seeds of Arabidopsis thaliana.</title>
        <authorList>
            <person name="Baud S."/>
            <person name="Dichow N.R."/>
            <person name="Kelemen Z."/>
            <person name="d'Andrea S."/>
            <person name="To A."/>
            <person name="Berger N."/>
            <person name="Canonge M."/>
            <person name="Kronenberger J."/>
            <person name="Viterbo D."/>
            <person name="Dubreucq B."/>
            <person name="Lepiniec L."/>
            <person name="Chardot T."/>
            <person name="Miquel M."/>
        </authorList>
    </citation>
    <scope>GENE FAMILY</scope>
    <scope>TISSUE SPECIFICITY</scope>
    <scope>DEVELOPMENTAL STAGE</scope>
    <scope>SUBCELLULAR LOCATION</scope>
    <scope>INDUCTION BY LEC2</scope>
    <scope>FUNCTION</scope>
</reference>